<organism>
    <name type="scientific">Escherichia coli O81 (strain ED1a)</name>
    <dbReference type="NCBI Taxonomy" id="585397"/>
    <lineage>
        <taxon>Bacteria</taxon>
        <taxon>Pseudomonadati</taxon>
        <taxon>Pseudomonadota</taxon>
        <taxon>Gammaproteobacteria</taxon>
        <taxon>Enterobacterales</taxon>
        <taxon>Enterobacteriaceae</taxon>
        <taxon>Escherichia</taxon>
    </lineage>
</organism>
<accession>B7MTX1</accession>
<dbReference type="EC" id="4.2.2.n2" evidence="1"/>
<dbReference type="EMBL" id="CU928162">
    <property type="protein sequence ID" value="CAR07535.1"/>
    <property type="molecule type" value="Genomic_DNA"/>
</dbReference>
<dbReference type="RefSeq" id="WP_001295994.1">
    <property type="nucleotide sequence ID" value="NC_011745.1"/>
</dbReference>
<dbReference type="SMR" id="B7MTX1"/>
<dbReference type="CAZy" id="GH23">
    <property type="family name" value="Glycoside Hydrolase Family 23"/>
</dbReference>
<dbReference type="KEGG" id="ecq:ECED1_1335"/>
<dbReference type="HOGENOM" id="CLU_103257_0_0_6"/>
<dbReference type="Proteomes" id="UP000000748">
    <property type="component" value="Chromosome"/>
</dbReference>
<dbReference type="GO" id="GO:0009279">
    <property type="term" value="C:cell outer membrane"/>
    <property type="evidence" value="ECO:0007669"/>
    <property type="project" value="UniProtKB-SubCell"/>
</dbReference>
<dbReference type="GO" id="GO:0008932">
    <property type="term" value="F:lytic endotransglycosylase activity"/>
    <property type="evidence" value="ECO:0007669"/>
    <property type="project" value="InterPro"/>
</dbReference>
<dbReference type="GO" id="GO:0016998">
    <property type="term" value="P:cell wall macromolecule catabolic process"/>
    <property type="evidence" value="ECO:0007669"/>
    <property type="project" value="UniProtKB-UniRule"/>
</dbReference>
<dbReference type="GO" id="GO:0071555">
    <property type="term" value="P:cell wall organization"/>
    <property type="evidence" value="ECO:0007669"/>
    <property type="project" value="UniProtKB-KW"/>
</dbReference>
<dbReference type="GO" id="GO:0000270">
    <property type="term" value="P:peptidoglycan metabolic process"/>
    <property type="evidence" value="ECO:0007669"/>
    <property type="project" value="InterPro"/>
</dbReference>
<dbReference type="CDD" id="cd16893">
    <property type="entry name" value="LT_MltC_MltE"/>
    <property type="match status" value="1"/>
</dbReference>
<dbReference type="FunFam" id="1.10.530.10:FF:000007">
    <property type="entry name" value="Endo-type membrane-bound lytic murein transglycosylase A"/>
    <property type="match status" value="1"/>
</dbReference>
<dbReference type="Gene3D" id="1.10.530.10">
    <property type="match status" value="1"/>
</dbReference>
<dbReference type="HAMAP" id="MF_01381">
    <property type="entry name" value="EmtA"/>
    <property type="match status" value="1"/>
</dbReference>
<dbReference type="InterPro" id="IPR023946">
    <property type="entry name" value="EmtA"/>
</dbReference>
<dbReference type="InterPro" id="IPR023346">
    <property type="entry name" value="Lysozyme-like_dom_sf"/>
</dbReference>
<dbReference type="InterPro" id="IPR000189">
    <property type="entry name" value="Transglyc_AS"/>
</dbReference>
<dbReference type="InterPro" id="IPR008258">
    <property type="entry name" value="Transglycosylase_SLT_dom_1"/>
</dbReference>
<dbReference type="NCBIfam" id="NF012014">
    <property type="entry name" value="PRK15470.1"/>
    <property type="match status" value="1"/>
</dbReference>
<dbReference type="PANTHER" id="PTHR37423:SF4">
    <property type="entry name" value="ENDO-TYPE MEMBRANE-BOUND LYTIC MUREIN TRANSGLYCOSYLASE A"/>
    <property type="match status" value="1"/>
</dbReference>
<dbReference type="PANTHER" id="PTHR37423">
    <property type="entry name" value="SOLUBLE LYTIC MUREIN TRANSGLYCOSYLASE-RELATED"/>
    <property type="match status" value="1"/>
</dbReference>
<dbReference type="Pfam" id="PF01464">
    <property type="entry name" value="SLT"/>
    <property type="match status" value="1"/>
</dbReference>
<dbReference type="SUPFAM" id="SSF53955">
    <property type="entry name" value="Lysozyme-like"/>
    <property type="match status" value="1"/>
</dbReference>
<dbReference type="PROSITE" id="PS51257">
    <property type="entry name" value="PROKAR_LIPOPROTEIN"/>
    <property type="match status" value="1"/>
</dbReference>
<dbReference type="PROSITE" id="PS00922">
    <property type="entry name" value="TRANSGLYCOSYLASE"/>
    <property type="match status" value="1"/>
</dbReference>
<sequence length="203" mass="22213">MKLRWFAFLIVLLAGCSSKHDYTNPPWNAKVPVQRAMQWMPISQKAGAAWGVDPQLITAIIAIESGGNPNAVSKSNAIGLMQIKASTSGRDVYRRMGWSGEPTTSELKNPERNISMGAAYLNILETGPLAGIEDPKVLQYALVVSYANGAGALLRTFSSDRKKAISKINDLDADEFLDHVARNHPAPQAPRYIYKLEQALDAM</sequence>
<name>EMTA_ECO81</name>
<comment type="function">
    <text evidence="1">Murein-degrading enzyme. May play a role in recycling of muropeptides during cell elongation and/or cell division. Preferentially cleaves at a distance of more than two disaccharide units from the ends of the glycan chain.</text>
</comment>
<comment type="catalytic activity">
    <reaction evidence="1">
        <text>Endolytic cleavage of the (1-&gt;4)-beta-glycosidic linkage between N-acetylmuramic acid (MurNAc) and N-acetylglucosamine (GlcNAc) residues in peptidoglycan with concomitant formation of a 1,6-anhydrobond in the MurNAc residue.</text>
        <dbReference type="EC" id="4.2.2.n2"/>
    </reaction>
</comment>
<comment type="subcellular location">
    <subcellularLocation>
        <location evidence="1">Cell outer membrane</location>
        <topology evidence="1">Lipid-anchor</topology>
    </subcellularLocation>
</comment>
<comment type="similarity">
    <text evidence="1">Belongs to the transglycosylase Slt family.</text>
</comment>
<evidence type="ECO:0000255" key="1">
    <source>
        <dbReference type="HAMAP-Rule" id="MF_01381"/>
    </source>
</evidence>
<protein>
    <recommendedName>
        <fullName evidence="1">Endo-type membrane-bound lytic murein transglycosylase A</fullName>
        <ecNumber evidence="1">4.2.2.n2</ecNumber>
    </recommendedName>
    <alternativeName>
        <fullName evidence="1">Peptidoglycan lytic endotransglycosylase</fullName>
    </alternativeName>
</protein>
<proteinExistence type="inferred from homology"/>
<gene>
    <name evidence="1" type="primary">emtA</name>
    <name type="ordered locus">ECED1_1335</name>
</gene>
<feature type="signal peptide" evidence="1">
    <location>
        <begin position="1"/>
        <end position="15"/>
    </location>
</feature>
<feature type="chain" id="PRO_1000184208" description="Endo-type membrane-bound lytic murein transglycosylase A">
    <location>
        <begin position="16"/>
        <end position="203"/>
    </location>
</feature>
<feature type="lipid moiety-binding region" description="N-palmitoyl cysteine" evidence="1">
    <location>
        <position position="16"/>
    </location>
</feature>
<feature type="lipid moiety-binding region" description="S-diacylglycerol cysteine" evidence="1">
    <location>
        <position position="16"/>
    </location>
</feature>
<keyword id="KW-0998">Cell outer membrane</keyword>
<keyword id="KW-0961">Cell wall biogenesis/degradation</keyword>
<keyword id="KW-0449">Lipoprotein</keyword>
<keyword id="KW-0456">Lyase</keyword>
<keyword id="KW-0472">Membrane</keyword>
<keyword id="KW-0564">Palmitate</keyword>
<keyword id="KW-0732">Signal</keyword>
<reference key="1">
    <citation type="journal article" date="2009" name="PLoS Genet.">
        <title>Organised genome dynamics in the Escherichia coli species results in highly diverse adaptive paths.</title>
        <authorList>
            <person name="Touchon M."/>
            <person name="Hoede C."/>
            <person name="Tenaillon O."/>
            <person name="Barbe V."/>
            <person name="Baeriswyl S."/>
            <person name="Bidet P."/>
            <person name="Bingen E."/>
            <person name="Bonacorsi S."/>
            <person name="Bouchier C."/>
            <person name="Bouvet O."/>
            <person name="Calteau A."/>
            <person name="Chiapello H."/>
            <person name="Clermont O."/>
            <person name="Cruveiller S."/>
            <person name="Danchin A."/>
            <person name="Diard M."/>
            <person name="Dossat C."/>
            <person name="Karoui M.E."/>
            <person name="Frapy E."/>
            <person name="Garry L."/>
            <person name="Ghigo J.M."/>
            <person name="Gilles A.M."/>
            <person name="Johnson J."/>
            <person name="Le Bouguenec C."/>
            <person name="Lescat M."/>
            <person name="Mangenot S."/>
            <person name="Martinez-Jehanne V."/>
            <person name="Matic I."/>
            <person name="Nassif X."/>
            <person name="Oztas S."/>
            <person name="Petit M.A."/>
            <person name="Pichon C."/>
            <person name="Rouy Z."/>
            <person name="Ruf C.S."/>
            <person name="Schneider D."/>
            <person name="Tourret J."/>
            <person name="Vacherie B."/>
            <person name="Vallenet D."/>
            <person name="Medigue C."/>
            <person name="Rocha E.P.C."/>
            <person name="Denamur E."/>
        </authorList>
    </citation>
    <scope>NUCLEOTIDE SEQUENCE [LARGE SCALE GENOMIC DNA]</scope>
    <source>
        <strain>ED1a</strain>
    </source>
</reference>